<feature type="signal peptide" evidence="2">
    <location>
        <begin position="1"/>
        <end position="25"/>
    </location>
</feature>
<feature type="propeptide" id="PRO_0000246778" evidence="1 2">
    <location>
        <begin position="26"/>
        <end position="113"/>
    </location>
</feature>
<feature type="chain" id="PRO_0000246779" description="Proprotein convertase subtilisin/kexin type 4" evidence="1 2">
    <location>
        <begin position="114"/>
        <end position="755"/>
    </location>
</feature>
<feature type="transmembrane region" description="Helical" evidence="2">
    <location>
        <begin position="709"/>
        <end position="729"/>
    </location>
</feature>
<feature type="domain" description="Peptidase S8" evidence="4">
    <location>
        <begin position="126"/>
        <end position="440"/>
    </location>
</feature>
<feature type="domain" description="P/Homo B" evidence="3">
    <location>
        <begin position="449"/>
        <end position="581"/>
    </location>
</feature>
<feature type="active site" description="Charge relay system" evidence="4">
    <location>
        <position position="158"/>
    </location>
</feature>
<feature type="active site" description="Charge relay system" evidence="4">
    <location>
        <position position="199"/>
    </location>
</feature>
<feature type="active site" description="Charge relay system" evidence="4">
    <location>
        <position position="373"/>
    </location>
</feature>
<feature type="glycosylation site" description="N-linked (GlcNAc...) asparagine" evidence="2">
    <location>
        <position position="475"/>
    </location>
</feature>
<feature type="glycosylation site" description="N-linked (GlcNAc...) asparagine" evidence="2">
    <location>
        <position position="629"/>
    </location>
</feature>
<feature type="splice variant" id="VSP_052097" description="In isoform 2." evidence="9">
    <location>
        <begin position="1"/>
        <end position="513"/>
    </location>
</feature>
<feature type="sequence variant" id="VAR_061772" description="In dbSNP:rs36123574.">
    <original>T</original>
    <variation>M</variation>
    <location>
        <position position="267"/>
    </location>
</feature>
<feature type="mutagenesis site" description="No effect on interaction with HSPA5." evidence="8">
    <original>S</original>
    <variation>A</variation>
    <location>
        <position position="373"/>
    </location>
</feature>
<feature type="sequence conflict" description="In Ref. 1; AAQ89322 and 3; AAH36354." evidence="11" ref="1 3">
    <original>P</original>
    <variation>S</variation>
    <location>
        <position position="66"/>
    </location>
</feature>
<gene>
    <name evidence="13" type="primary">PCSK4</name>
    <name evidence="10" type="synonym">PC4</name>
    <name type="ORF">UNQ2757/PRO6496</name>
</gene>
<proteinExistence type="evidence at protein level"/>
<name>PCSK4_HUMAN</name>
<reference evidence="11 14" key="1">
    <citation type="journal article" date="2003" name="Genome Res.">
        <title>The secreted protein discovery initiative (SPDI), a large-scale effort to identify novel human secreted and transmembrane proteins: a bioinformatics assessment.</title>
        <authorList>
            <person name="Clark H.F."/>
            <person name="Gurney A.L."/>
            <person name="Abaya E."/>
            <person name="Baker K."/>
            <person name="Baldwin D.T."/>
            <person name="Brush J."/>
            <person name="Chen J."/>
            <person name="Chow B."/>
            <person name="Chui C."/>
            <person name="Crowley C."/>
            <person name="Currell B."/>
            <person name="Deuel B."/>
            <person name="Dowd P."/>
            <person name="Eaton D."/>
            <person name="Foster J.S."/>
            <person name="Grimaldi C."/>
            <person name="Gu Q."/>
            <person name="Hass P.E."/>
            <person name="Heldens S."/>
            <person name="Huang A."/>
            <person name="Kim H.S."/>
            <person name="Klimowski L."/>
            <person name="Jin Y."/>
            <person name="Johnson S."/>
            <person name="Lee J."/>
            <person name="Lewis L."/>
            <person name="Liao D."/>
            <person name="Mark M.R."/>
            <person name="Robbie E."/>
            <person name="Sanchez C."/>
            <person name="Schoenfeld J."/>
            <person name="Seshagiri S."/>
            <person name="Simmons L."/>
            <person name="Singh J."/>
            <person name="Smith V."/>
            <person name="Stinson J."/>
            <person name="Vagts A."/>
            <person name="Vandlen R.L."/>
            <person name="Watanabe C."/>
            <person name="Wieand D."/>
            <person name="Woods K."/>
            <person name="Xie M.-H."/>
            <person name="Yansura D.G."/>
            <person name="Yi S."/>
            <person name="Yu G."/>
            <person name="Yuan J."/>
            <person name="Zhang M."/>
            <person name="Zhang Z."/>
            <person name="Goddard A.D."/>
            <person name="Wood W.I."/>
            <person name="Godowski P.J."/>
            <person name="Gray A.M."/>
        </authorList>
    </citation>
    <scope>NUCLEOTIDE SEQUENCE [LARGE SCALE MRNA] (ISOFORM 1)</scope>
</reference>
<reference key="2">
    <citation type="journal article" date="2004" name="Nature">
        <title>The DNA sequence and biology of human chromosome 19.</title>
        <authorList>
            <person name="Grimwood J."/>
            <person name="Gordon L.A."/>
            <person name="Olsen A.S."/>
            <person name="Terry A."/>
            <person name="Schmutz J."/>
            <person name="Lamerdin J.E."/>
            <person name="Hellsten U."/>
            <person name="Goodstein D."/>
            <person name="Couronne O."/>
            <person name="Tran-Gyamfi M."/>
            <person name="Aerts A."/>
            <person name="Altherr M."/>
            <person name="Ashworth L."/>
            <person name="Bajorek E."/>
            <person name="Black S."/>
            <person name="Branscomb E."/>
            <person name="Caenepeel S."/>
            <person name="Carrano A.V."/>
            <person name="Caoile C."/>
            <person name="Chan Y.M."/>
            <person name="Christensen M."/>
            <person name="Cleland C.A."/>
            <person name="Copeland A."/>
            <person name="Dalin E."/>
            <person name="Dehal P."/>
            <person name="Denys M."/>
            <person name="Detter J.C."/>
            <person name="Escobar J."/>
            <person name="Flowers D."/>
            <person name="Fotopulos D."/>
            <person name="Garcia C."/>
            <person name="Georgescu A.M."/>
            <person name="Glavina T."/>
            <person name="Gomez M."/>
            <person name="Gonzales E."/>
            <person name="Groza M."/>
            <person name="Hammon N."/>
            <person name="Hawkins T."/>
            <person name="Haydu L."/>
            <person name="Ho I."/>
            <person name="Huang W."/>
            <person name="Israni S."/>
            <person name="Jett J."/>
            <person name="Kadner K."/>
            <person name="Kimball H."/>
            <person name="Kobayashi A."/>
            <person name="Larionov V."/>
            <person name="Leem S.-H."/>
            <person name="Lopez F."/>
            <person name="Lou Y."/>
            <person name="Lowry S."/>
            <person name="Malfatti S."/>
            <person name="Martinez D."/>
            <person name="McCready P.M."/>
            <person name="Medina C."/>
            <person name="Morgan J."/>
            <person name="Nelson K."/>
            <person name="Nolan M."/>
            <person name="Ovcharenko I."/>
            <person name="Pitluck S."/>
            <person name="Pollard M."/>
            <person name="Popkie A.P."/>
            <person name="Predki P."/>
            <person name="Quan G."/>
            <person name="Ramirez L."/>
            <person name="Rash S."/>
            <person name="Retterer J."/>
            <person name="Rodriguez A."/>
            <person name="Rogers S."/>
            <person name="Salamov A."/>
            <person name="Salazar A."/>
            <person name="She X."/>
            <person name="Smith D."/>
            <person name="Slezak T."/>
            <person name="Solovyev V."/>
            <person name="Thayer N."/>
            <person name="Tice H."/>
            <person name="Tsai M."/>
            <person name="Ustaszewska A."/>
            <person name="Vo N."/>
            <person name="Wagner M."/>
            <person name="Wheeler J."/>
            <person name="Wu K."/>
            <person name="Xie G."/>
            <person name="Yang J."/>
            <person name="Dubchak I."/>
            <person name="Furey T.S."/>
            <person name="DeJong P."/>
            <person name="Dickson M."/>
            <person name="Gordon D."/>
            <person name="Eichler E.E."/>
            <person name="Pennacchio L.A."/>
            <person name="Richardson P."/>
            <person name="Stubbs L."/>
            <person name="Rokhsar D.S."/>
            <person name="Myers R.M."/>
            <person name="Rubin E.M."/>
            <person name="Lucas S.M."/>
        </authorList>
    </citation>
    <scope>NUCLEOTIDE SEQUENCE [LARGE SCALE GENOMIC DNA]</scope>
</reference>
<reference evidence="11 13" key="3">
    <citation type="journal article" date="2004" name="Genome Res.">
        <title>The status, quality, and expansion of the NIH full-length cDNA project: the Mammalian Gene Collection (MGC).</title>
        <authorList>
            <consortium name="The MGC Project Team"/>
        </authorList>
    </citation>
    <scope>NUCLEOTIDE SEQUENCE [LARGE SCALE MRNA] (ISOFORM 2)</scope>
    <source>
        <tissue evidence="13">Brain</tissue>
    </source>
</reference>
<reference key="4">
    <citation type="journal article" date="2007" name="BMC Genomics">
        <title>The full-ORF clone resource of the German cDNA consortium.</title>
        <authorList>
            <person name="Bechtel S."/>
            <person name="Rosenfelder H."/>
            <person name="Duda A."/>
            <person name="Schmidt C.P."/>
            <person name="Ernst U."/>
            <person name="Wellenreuther R."/>
            <person name="Mehrle A."/>
            <person name="Schuster C."/>
            <person name="Bahr A."/>
            <person name="Bloecker H."/>
            <person name="Heubner D."/>
            <person name="Hoerlein A."/>
            <person name="Michel G."/>
            <person name="Wedler H."/>
            <person name="Koehrer K."/>
            <person name="Ottenwaelder B."/>
            <person name="Poustka A."/>
            <person name="Wiemann S."/>
            <person name="Schupp I."/>
        </authorList>
    </citation>
    <scope>NUCLEOTIDE SEQUENCE [LARGE SCALE MRNA] OF 526-755 (ISOFORMS 1/2)</scope>
    <source>
        <tissue>Testis</tissue>
    </source>
</reference>
<reference evidence="11" key="5">
    <citation type="journal article" date="2005" name="Proc. Natl. Acad. Sci. U.S.A.">
        <title>Role of pro-IGF-II processing by proprotein convertase 4 in human placental development.</title>
        <authorList>
            <person name="Qiu Q."/>
            <person name="Basak A."/>
            <person name="Mbikay M."/>
            <person name="Tsang B.K."/>
            <person name="Gruslin A."/>
        </authorList>
    </citation>
    <scope>FUNCTION</scope>
    <scope>TISSUE SPECIFICITY</scope>
    <scope>DEVELOPMENTAL STAGE</scope>
</reference>
<reference key="6">
    <citation type="journal article" date="2011" name="Mol. Cell. Biochem.">
        <title>The precursor to the germ cell-specific PCSK4 proteinase is inefficiently activated in transfected somatic cells: evidence of interaction with the BiP chaperone.</title>
        <authorList>
            <person name="Gyamera-Acheampong C."/>
            <person name="Sirois F."/>
            <person name="Denis N.J."/>
            <person name="Mishra P."/>
            <person name="Figeys D."/>
            <person name="Basak A."/>
            <person name="Mbikay M."/>
        </authorList>
    </citation>
    <scope>GLYCOSYLATION</scope>
    <scope>MUTAGENESIS OF SER-373</scope>
    <scope>INTERACTION WITH HSPA5</scope>
    <scope>PROTEOLYTIC CLEAVAGE</scope>
</reference>
<accession>Q6UW60</accession>
<accession>Q8IY88</accession>
<accession>Q9UF79</accession>
<sequence>MRPAPIALWLRLVLALALVRPRAVGWAPVRAPIYVSSWAVQVSQGNREVERLARKFGFVNLGPIFPDGQYFHLRHRGVVQQSLTPHWGHRLHLKKNPKVQWFQQQTLQRRVKRSVVVPTDPWFSKQWYMNSEAQPDLSILQAWSQGLSGQGIVVSVLDDGIEKDHPDLWANYDPLASYDFNDYDPDPQPRYTPSKENRHGTRCAGEVAAMANNGFCGVGVAFNARIGGVRMLDGTITDVIEAQSLSLQPQHIHIYSASWGPEDDGRTVDGPGILTREAFRRGVTKGRGGLGTLFIWASGNGGLHYDNCNCDGYTNSIHTLSVGSTTQQGRVPWYSEACASTLTTTYSSGVATDPQIVTTDLHHGCTDQHTGTSASAPLAAGMIALALEANPFLTWRDMQHLVVRASKPAHLQAEDWRTNGVGRQVSHHYGYGLLDAGLLVDTARTWLPTQPQRKCAVRVQSRPTPILPLIYIRENVSACAGLHNSIRSLEHVQAQLTLSYSRRGDLEISLTSPMGTRSTLVAIRPLDVSTEGYNNWVFMSTHFWDENPQGVWTLGLENKGYYFNTGTLYRYTLLLYGTAEDMTARPTGPQVTSSACVQRDTEGLCQACDGPAYILGQLCLAYCPPRFFNHTRLVTAGPGHTAAPALRVCSSCHASCYTCRGGSPRDCTSCPPSSTLDQQQGSCMGPTTPDSRPRLRAAACPHHRCPASAMVLSLLAVTLGGPVLCGMSMDLPLYAWLSRARATPTKPQVWLPAGT</sequence>
<evidence type="ECO:0000250" key="1">
    <source>
        <dbReference type="UniProtKB" id="P29121"/>
    </source>
</evidence>
<evidence type="ECO:0000255" key="2"/>
<evidence type="ECO:0000255" key="3">
    <source>
        <dbReference type="PROSITE-ProRule" id="PRU01173"/>
    </source>
</evidence>
<evidence type="ECO:0000255" key="4">
    <source>
        <dbReference type="PROSITE-ProRule" id="PRU01240"/>
    </source>
</evidence>
<evidence type="ECO:0000269" key="5">
    <source>
    </source>
</evidence>
<evidence type="ECO:0000269" key="6">
    <source>
    </source>
</evidence>
<evidence type="ECO:0000269" key="7">
    <source>
    </source>
</evidence>
<evidence type="ECO:0000269" key="8">
    <source>
    </source>
</evidence>
<evidence type="ECO:0000303" key="9">
    <source>
    </source>
</evidence>
<evidence type="ECO:0000303" key="10">
    <source>
    </source>
</evidence>
<evidence type="ECO:0000305" key="11"/>
<evidence type="ECO:0000305" key="12">
    <source>
    </source>
</evidence>
<evidence type="ECO:0000312" key="13">
    <source>
        <dbReference type="EMBL" id="AAH36354.1"/>
    </source>
</evidence>
<evidence type="ECO:0000312" key="14">
    <source>
        <dbReference type="EMBL" id="AAQ89322.1"/>
    </source>
</evidence>
<keyword id="KW-0025">Alternative splicing</keyword>
<keyword id="KW-0165">Cleavage on pair of basic residues</keyword>
<keyword id="KW-0968">Cytoplasmic vesicle</keyword>
<keyword id="KW-0325">Glycoprotein</keyword>
<keyword id="KW-0378">Hydrolase</keyword>
<keyword id="KW-0472">Membrane</keyword>
<keyword id="KW-0645">Protease</keyword>
<keyword id="KW-1267">Proteomics identification</keyword>
<keyword id="KW-1185">Reference proteome</keyword>
<keyword id="KW-0720">Serine protease</keyword>
<keyword id="KW-0732">Signal</keyword>
<keyword id="KW-0812">Transmembrane</keyword>
<keyword id="KW-1133">Transmembrane helix</keyword>
<keyword id="KW-0865">Zymogen</keyword>
<dbReference type="EC" id="3.4.21.-"/>
<dbReference type="EMBL" id="AY358963">
    <property type="protein sequence ID" value="AAQ89322.1"/>
    <property type="molecule type" value="mRNA"/>
</dbReference>
<dbReference type="EMBL" id="AC027307">
    <property type="status" value="NOT_ANNOTATED_CDS"/>
    <property type="molecule type" value="Genomic_DNA"/>
</dbReference>
<dbReference type="EMBL" id="BC036354">
    <property type="protein sequence ID" value="AAH36354.1"/>
    <property type="molecule type" value="mRNA"/>
</dbReference>
<dbReference type="EMBL" id="AL133566">
    <property type="protein sequence ID" value="CAB63719.3"/>
    <property type="molecule type" value="mRNA"/>
</dbReference>
<dbReference type="CCDS" id="CCDS12069.2">
    <molecule id="Q6UW60-1"/>
</dbReference>
<dbReference type="PIR" id="T43487">
    <property type="entry name" value="T43487"/>
</dbReference>
<dbReference type="RefSeq" id="NP_060043.2">
    <molecule id="Q6UW60-1"/>
    <property type="nucleotide sequence ID" value="NM_017573.5"/>
</dbReference>
<dbReference type="SMR" id="Q6UW60"/>
<dbReference type="BioGRID" id="120136">
    <property type="interactions" value="5"/>
</dbReference>
<dbReference type="CORUM" id="Q6UW60"/>
<dbReference type="FunCoup" id="Q6UW60">
    <property type="interactions" value="104"/>
</dbReference>
<dbReference type="IntAct" id="Q6UW60">
    <property type="interactions" value="3"/>
</dbReference>
<dbReference type="STRING" id="9606.ENSP00000300954"/>
<dbReference type="BindingDB" id="Q6UW60"/>
<dbReference type="ChEMBL" id="CHEMBL4861"/>
<dbReference type="GuidetoPHARMACOLOGY" id="2384"/>
<dbReference type="MEROPS" id="S08.074"/>
<dbReference type="GlyCosmos" id="Q6UW60">
    <property type="glycosylation" value="2 sites, No reported glycans"/>
</dbReference>
<dbReference type="GlyGen" id="Q6UW60">
    <property type="glycosylation" value="2 sites"/>
</dbReference>
<dbReference type="iPTMnet" id="Q6UW60"/>
<dbReference type="PhosphoSitePlus" id="Q6UW60"/>
<dbReference type="BioMuta" id="PCSK4"/>
<dbReference type="DMDM" id="296439263"/>
<dbReference type="MassIVE" id="Q6UW60"/>
<dbReference type="PaxDb" id="9606-ENSP00000300954"/>
<dbReference type="PeptideAtlas" id="Q6UW60"/>
<dbReference type="ProteomicsDB" id="67450">
    <molecule id="Q6UW60-1"/>
</dbReference>
<dbReference type="Antibodypedia" id="1614">
    <property type="antibodies" value="153 antibodies from 24 providers"/>
</dbReference>
<dbReference type="DNASU" id="54760"/>
<dbReference type="Ensembl" id="ENST00000300954.10">
    <molecule id="Q6UW60-1"/>
    <property type="protein sequence ID" value="ENSP00000300954.5"/>
    <property type="gene ID" value="ENSG00000115257.15"/>
</dbReference>
<dbReference type="GeneID" id="54760"/>
<dbReference type="KEGG" id="hsa:54760"/>
<dbReference type="MANE-Select" id="ENST00000300954.10">
    <property type="protein sequence ID" value="ENSP00000300954.5"/>
    <property type="RefSeq nucleotide sequence ID" value="NM_017573.5"/>
    <property type="RefSeq protein sequence ID" value="NP_060043.2"/>
</dbReference>
<dbReference type="UCSC" id="uc002ltb.3">
    <molecule id="Q6UW60-1"/>
    <property type="organism name" value="human"/>
</dbReference>
<dbReference type="AGR" id="HGNC:8746"/>
<dbReference type="CTD" id="54760"/>
<dbReference type="DisGeNET" id="54760"/>
<dbReference type="GeneCards" id="PCSK4"/>
<dbReference type="HGNC" id="HGNC:8746">
    <property type="gene designation" value="PCSK4"/>
</dbReference>
<dbReference type="HPA" id="ENSG00000115257">
    <property type="expression patterns" value="Tissue enriched (testis)"/>
</dbReference>
<dbReference type="MIM" id="600487">
    <property type="type" value="gene"/>
</dbReference>
<dbReference type="neXtProt" id="NX_Q6UW60"/>
<dbReference type="OpenTargets" id="ENSG00000115257"/>
<dbReference type="PharmGKB" id="PA33092"/>
<dbReference type="VEuPathDB" id="HostDB:ENSG00000115257"/>
<dbReference type="eggNOG" id="KOG3525">
    <property type="taxonomic scope" value="Eukaryota"/>
</dbReference>
<dbReference type="GeneTree" id="ENSGT00940000161989"/>
<dbReference type="HOGENOM" id="CLU_002976_4_0_1"/>
<dbReference type="InParanoid" id="Q6UW60"/>
<dbReference type="OMA" id="RDGTCQE"/>
<dbReference type="OrthoDB" id="300641at2759"/>
<dbReference type="PAN-GO" id="Q6UW60">
    <property type="GO annotations" value="5 GO annotations based on evolutionary models"/>
</dbReference>
<dbReference type="PhylomeDB" id="Q6UW60"/>
<dbReference type="TreeFam" id="TF314277"/>
<dbReference type="BRENDA" id="3.4.21.B24">
    <property type="organism ID" value="2681"/>
</dbReference>
<dbReference type="BRENDA" id="3.4.21.B25">
    <property type="organism ID" value="2681"/>
</dbReference>
<dbReference type="PathwayCommons" id="Q6UW60"/>
<dbReference type="SignaLink" id="Q6UW60"/>
<dbReference type="BioGRID-ORCS" id="54760">
    <property type="hits" value="10 hits in 1158 CRISPR screens"/>
</dbReference>
<dbReference type="ChiTaRS" id="PCSK4">
    <property type="organism name" value="human"/>
</dbReference>
<dbReference type="GeneWiki" id="PCSK4"/>
<dbReference type="GenomeRNAi" id="54760"/>
<dbReference type="Pharos" id="Q6UW60">
    <property type="development level" value="Tbio"/>
</dbReference>
<dbReference type="PRO" id="PR:Q6UW60"/>
<dbReference type="Proteomes" id="UP000005640">
    <property type="component" value="Chromosome 19"/>
</dbReference>
<dbReference type="RNAct" id="Q6UW60">
    <property type="molecule type" value="protein"/>
</dbReference>
<dbReference type="Bgee" id="ENSG00000115257">
    <property type="expression patterns" value="Expressed in left testis and 94 other cell types or tissues"/>
</dbReference>
<dbReference type="ExpressionAtlas" id="Q6UW60">
    <property type="expression patterns" value="baseline and differential"/>
</dbReference>
<dbReference type="GO" id="GO:0002080">
    <property type="term" value="C:acrosomal membrane"/>
    <property type="evidence" value="ECO:0000250"/>
    <property type="project" value="UniProtKB"/>
</dbReference>
<dbReference type="GO" id="GO:0001669">
    <property type="term" value="C:acrosomal vesicle"/>
    <property type="evidence" value="ECO:0000250"/>
    <property type="project" value="UniProtKB"/>
</dbReference>
<dbReference type="GO" id="GO:0000139">
    <property type="term" value="C:Golgi membrane"/>
    <property type="evidence" value="ECO:0000318"/>
    <property type="project" value="GO_Central"/>
</dbReference>
<dbReference type="GO" id="GO:0005802">
    <property type="term" value="C:trans-Golgi network"/>
    <property type="evidence" value="ECO:0000318"/>
    <property type="project" value="GO_Central"/>
</dbReference>
<dbReference type="GO" id="GO:0004252">
    <property type="term" value="F:serine-type endopeptidase activity"/>
    <property type="evidence" value="ECO:0000318"/>
    <property type="project" value="GO_Central"/>
</dbReference>
<dbReference type="GO" id="GO:0007340">
    <property type="term" value="P:acrosome reaction"/>
    <property type="evidence" value="ECO:0000250"/>
    <property type="project" value="UniProtKB"/>
</dbReference>
<dbReference type="GO" id="GO:0007339">
    <property type="term" value="P:binding of sperm to zona pellucida"/>
    <property type="evidence" value="ECO:0000250"/>
    <property type="project" value="UniProtKB"/>
</dbReference>
<dbReference type="GO" id="GO:0009566">
    <property type="term" value="P:fertilization"/>
    <property type="evidence" value="ECO:0000250"/>
    <property type="project" value="UniProtKB"/>
</dbReference>
<dbReference type="GO" id="GO:0016486">
    <property type="term" value="P:peptide hormone processing"/>
    <property type="evidence" value="ECO:0000318"/>
    <property type="project" value="GO_Central"/>
</dbReference>
<dbReference type="GO" id="GO:0016485">
    <property type="term" value="P:protein processing"/>
    <property type="evidence" value="ECO:0000314"/>
    <property type="project" value="UniProtKB"/>
</dbReference>
<dbReference type="GO" id="GO:0022414">
    <property type="term" value="P:reproductive process"/>
    <property type="evidence" value="ECO:0000250"/>
    <property type="project" value="UniProtKB"/>
</dbReference>
<dbReference type="GO" id="GO:0048240">
    <property type="term" value="P:sperm capacitation"/>
    <property type="evidence" value="ECO:0000250"/>
    <property type="project" value="UniProtKB"/>
</dbReference>
<dbReference type="CDD" id="cd00064">
    <property type="entry name" value="FU"/>
    <property type="match status" value="1"/>
</dbReference>
<dbReference type="CDD" id="cd04059">
    <property type="entry name" value="Peptidases_S8_Protein_convertases_Kexins_Furin-like"/>
    <property type="match status" value="1"/>
</dbReference>
<dbReference type="FunFam" id="3.40.50.200:FF:000001">
    <property type="entry name" value="Furin 2, isoform B"/>
    <property type="match status" value="1"/>
</dbReference>
<dbReference type="FunFam" id="2.60.120.260:FF:000034">
    <property type="entry name" value="furin isoform X2"/>
    <property type="match status" value="1"/>
</dbReference>
<dbReference type="FunFam" id="2.10.220.10:FF:000045">
    <property type="entry name" value="Proprotein convertase subtilisin/kexin type 4"/>
    <property type="match status" value="1"/>
</dbReference>
<dbReference type="FunFam" id="3.30.70.850:FF:000001">
    <property type="entry name" value="Proprotein convertase subtilisin/kexin type 5"/>
    <property type="match status" value="1"/>
</dbReference>
<dbReference type="Gene3D" id="2.60.120.260">
    <property type="entry name" value="Galactose-binding domain-like"/>
    <property type="match status" value="1"/>
</dbReference>
<dbReference type="Gene3D" id="2.10.220.10">
    <property type="entry name" value="Hormone Receptor, Insulin-like Growth Factor Receptor 1, Chain A, domain 2"/>
    <property type="match status" value="1"/>
</dbReference>
<dbReference type="Gene3D" id="3.30.70.850">
    <property type="entry name" value="Peptidase S8, pro-domain"/>
    <property type="match status" value="1"/>
</dbReference>
<dbReference type="Gene3D" id="3.40.50.200">
    <property type="entry name" value="Peptidase S8/S53 domain"/>
    <property type="match status" value="1"/>
</dbReference>
<dbReference type="InterPro" id="IPR006212">
    <property type="entry name" value="Furin_repeat"/>
</dbReference>
<dbReference type="InterPro" id="IPR008979">
    <property type="entry name" value="Galactose-bd-like_sf"/>
</dbReference>
<dbReference type="InterPro" id="IPR009030">
    <property type="entry name" value="Growth_fac_rcpt_cys_sf"/>
</dbReference>
<dbReference type="InterPro" id="IPR034182">
    <property type="entry name" value="Kexin/furin"/>
</dbReference>
<dbReference type="InterPro" id="IPR002884">
    <property type="entry name" value="P_dom"/>
</dbReference>
<dbReference type="InterPro" id="IPR000209">
    <property type="entry name" value="Peptidase_S8/S53_dom"/>
</dbReference>
<dbReference type="InterPro" id="IPR036852">
    <property type="entry name" value="Peptidase_S8/S53_dom_sf"/>
</dbReference>
<dbReference type="InterPro" id="IPR023827">
    <property type="entry name" value="Peptidase_S8_Asp-AS"/>
</dbReference>
<dbReference type="InterPro" id="IPR022398">
    <property type="entry name" value="Peptidase_S8_His-AS"/>
</dbReference>
<dbReference type="InterPro" id="IPR023828">
    <property type="entry name" value="Peptidase_S8_Ser-AS"/>
</dbReference>
<dbReference type="InterPro" id="IPR015500">
    <property type="entry name" value="Peptidase_S8_subtilisin-rel"/>
</dbReference>
<dbReference type="InterPro" id="IPR032815">
    <property type="entry name" value="S8_pro-domain"/>
</dbReference>
<dbReference type="InterPro" id="IPR038466">
    <property type="entry name" value="S8_pro-domain_sf"/>
</dbReference>
<dbReference type="PANTHER" id="PTHR42884">
    <property type="entry name" value="PROPROTEIN CONVERTASE SUBTILISIN/KEXIN-RELATED"/>
    <property type="match status" value="1"/>
</dbReference>
<dbReference type="PANTHER" id="PTHR42884:SF16">
    <property type="entry name" value="PROPROTEIN CONVERTASE SUBTILISIN_KEXIN TYPE 4"/>
    <property type="match status" value="1"/>
</dbReference>
<dbReference type="Pfam" id="PF01483">
    <property type="entry name" value="P_proprotein"/>
    <property type="match status" value="1"/>
</dbReference>
<dbReference type="Pfam" id="PF00082">
    <property type="entry name" value="Peptidase_S8"/>
    <property type="match status" value="1"/>
</dbReference>
<dbReference type="Pfam" id="PF16470">
    <property type="entry name" value="S8_pro-domain"/>
    <property type="match status" value="1"/>
</dbReference>
<dbReference type="PRINTS" id="PR00723">
    <property type="entry name" value="SUBTILISIN"/>
</dbReference>
<dbReference type="SMART" id="SM00261">
    <property type="entry name" value="FU"/>
    <property type="match status" value="1"/>
</dbReference>
<dbReference type="SUPFAM" id="SSF49785">
    <property type="entry name" value="Galactose-binding domain-like"/>
    <property type="match status" value="1"/>
</dbReference>
<dbReference type="SUPFAM" id="SSF57184">
    <property type="entry name" value="Growth factor receptor domain"/>
    <property type="match status" value="1"/>
</dbReference>
<dbReference type="SUPFAM" id="SSF54897">
    <property type="entry name" value="Protease propeptides/inhibitors"/>
    <property type="match status" value="1"/>
</dbReference>
<dbReference type="SUPFAM" id="SSF52743">
    <property type="entry name" value="Subtilisin-like"/>
    <property type="match status" value="1"/>
</dbReference>
<dbReference type="PROSITE" id="PS51829">
    <property type="entry name" value="P_HOMO_B"/>
    <property type="match status" value="1"/>
</dbReference>
<dbReference type="PROSITE" id="PS51892">
    <property type="entry name" value="SUBTILASE"/>
    <property type="match status" value="1"/>
</dbReference>
<dbReference type="PROSITE" id="PS00136">
    <property type="entry name" value="SUBTILASE_ASP"/>
    <property type="match status" value="1"/>
</dbReference>
<dbReference type="PROSITE" id="PS00137">
    <property type="entry name" value="SUBTILASE_HIS"/>
    <property type="match status" value="1"/>
</dbReference>
<dbReference type="PROSITE" id="PS00138">
    <property type="entry name" value="SUBTILASE_SER"/>
    <property type="match status" value="1"/>
</dbReference>
<organism>
    <name type="scientific">Homo sapiens</name>
    <name type="common">Human</name>
    <dbReference type="NCBI Taxonomy" id="9606"/>
    <lineage>
        <taxon>Eukaryota</taxon>
        <taxon>Metazoa</taxon>
        <taxon>Chordata</taxon>
        <taxon>Craniata</taxon>
        <taxon>Vertebrata</taxon>
        <taxon>Euteleostomi</taxon>
        <taxon>Mammalia</taxon>
        <taxon>Eutheria</taxon>
        <taxon>Euarchontoglires</taxon>
        <taxon>Primates</taxon>
        <taxon>Haplorrhini</taxon>
        <taxon>Catarrhini</taxon>
        <taxon>Hominidae</taxon>
        <taxon>Homo</taxon>
    </lineage>
</organism>
<protein>
    <recommendedName>
        <fullName>Proprotein convertase subtilisin/kexin type 4</fullName>
        <ecNumber>3.4.21.-</ecNumber>
    </recommendedName>
    <alternativeName>
        <fullName>Proprotein convertase 4</fullName>
        <shortName>PC4</shortName>
    </alternativeName>
</protein>
<comment type="function">
    <text evidence="1 7">Proprotein convertase involved in the processing of hormone and other protein precursors at sites comprised of pairs of basic amino acid residues (By similarity). In males, important for ADAM2 processing as well as other acrosomal proteins with roles in fertilization and critical for normal fertilization events such as sperm capacitation, acrosome reaction and binding of sperm to zona pellucida (By similarity). Also plays a role in female fertility, involved in the regulation of trophoblast migration and placental development, may be through the proteolytical processing and activation of proteins such as IGF2 (PubMed:16040806). May also participate in folliculogenesis in the ovaries (By similarity).</text>
</comment>
<comment type="subunit">
    <text evidence="8">The proPCSK4 form interacts with HSPA5; the interaction takes place at the endoplasmic reticulum.</text>
</comment>
<comment type="interaction">
    <interactant intactId="EBI-13342757">
        <id>Q6UW60</id>
    </interactant>
    <interactant intactId="EBI-12092171">
        <id>Q12797-6</id>
        <label>ASPH</label>
    </interactant>
    <organismsDiffer>false</organismsDiffer>
    <experiments>3</experiments>
</comment>
<comment type="interaction">
    <interactant intactId="EBI-25960845">
        <id>Q6UW60-2</id>
    </interactant>
    <interactant intactId="EBI-466029">
        <id>P42858</id>
        <label>HTT</label>
    </interactant>
    <organismsDiffer>false</organismsDiffer>
    <experiments>3</experiments>
</comment>
<comment type="subcellular location">
    <subcellularLocation>
        <location evidence="2">Membrane</location>
        <topology evidence="2">Single-pass membrane protein</topology>
    </subcellularLocation>
    <subcellularLocation>
        <location evidence="1">Cytoplasmic vesicle</location>
        <location evidence="1">Secretory vesicle</location>
        <location evidence="1">Acrosome membrane</location>
    </subcellularLocation>
</comment>
<comment type="alternative products">
    <event type="alternative splicing"/>
    <isoform>
        <id>Q6UW60-1</id>
        <name evidence="5">1</name>
        <sequence type="displayed"/>
    </isoform>
    <isoform>
        <id>Q6UW60-2</id>
        <name evidence="6">2</name>
        <sequence type="described" ref="VSP_052097"/>
    </isoform>
</comment>
<comment type="tissue specificity">
    <text evidence="7">Placenta.</text>
</comment>
<comment type="developmental stage">
    <text evidence="7">Localized predominantly in the cytotrophoblast layer of trophoblast cells during the first trimester of pregnancy, and to the syncytiotrophoblast and stroma cells during the third trimester.</text>
</comment>
<comment type="PTM">
    <text evidence="8">N-glycosylated.</text>
</comment>
<comment type="PTM">
    <text evidence="12">Synthesized in the endoplasmic reticulum as a zymogen, is matured by autocatalytic cleavage between the prodomain and the catalytic domain.</text>
</comment>
<comment type="similarity">
    <text evidence="11">Belongs to the peptidase S8 family. Furin subfamily.</text>
</comment>